<dbReference type="EC" id="3.13.2.1" evidence="1"/>
<dbReference type="EMBL" id="CP001298">
    <property type="protein sequence ID" value="ACK85662.1"/>
    <property type="molecule type" value="Genomic_DNA"/>
</dbReference>
<dbReference type="RefSeq" id="WP_003606448.1">
    <property type="nucleotide sequence ID" value="NC_011757.1"/>
</dbReference>
<dbReference type="SMR" id="B7KSJ4"/>
<dbReference type="GeneID" id="72992167"/>
<dbReference type="KEGG" id="mch:Mchl_4897"/>
<dbReference type="HOGENOM" id="CLU_025194_2_1_5"/>
<dbReference type="UniPathway" id="UPA00314">
    <property type="reaction ID" value="UER00076"/>
</dbReference>
<dbReference type="Proteomes" id="UP000002385">
    <property type="component" value="Chromosome"/>
</dbReference>
<dbReference type="GO" id="GO:0005829">
    <property type="term" value="C:cytosol"/>
    <property type="evidence" value="ECO:0007669"/>
    <property type="project" value="TreeGrafter"/>
</dbReference>
<dbReference type="GO" id="GO:0004013">
    <property type="term" value="F:adenosylhomocysteinase activity"/>
    <property type="evidence" value="ECO:0007669"/>
    <property type="project" value="UniProtKB-UniRule"/>
</dbReference>
<dbReference type="GO" id="GO:0071269">
    <property type="term" value="P:L-homocysteine biosynthetic process"/>
    <property type="evidence" value="ECO:0007669"/>
    <property type="project" value="UniProtKB-UniRule"/>
</dbReference>
<dbReference type="GO" id="GO:0006730">
    <property type="term" value="P:one-carbon metabolic process"/>
    <property type="evidence" value="ECO:0007669"/>
    <property type="project" value="UniProtKB-KW"/>
</dbReference>
<dbReference type="GO" id="GO:0033353">
    <property type="term" value="P:S-adenosylmethionine cycle"/>
    <property type="evidence" value="ECO:0007669"/>
    <property type="project" value="TreeGrafter"/>
</dbReference>
<dbReference type="CDD" id="cd00401">
    <property type="entry name" value="SAHH"/>
    <property type="match status" value="1"/>
</dbReference>
<dbReference type="FunFam" id="3.40.50.720:FF:000004">
    <property type="entry name" value="Adenosylhomocysteinase"/>
    <property type="match status" value="1"/>
</dbReference>
<dbReference type="Gene3D" id="3.40.50.1480">
    <property type="entry name" value="Adenosylhomocysteinase-like"/>
    <property type="match status" value="1"/>
</dbReference>
<dbReference type="Gene3D" id="3.40.50.720">
    <property type="entry name" value="NAD(P)-binding Rossmann-like Domain"/>
    <property type="match status" value="1"/>
</dbReference>
<dbReference type="HAMAP" id="MF_00563">
    <property type="entry name" value="AdoHcyase"/>
    <property type="match status" value="1"/>
</dbReference>
<dbReference type="InterPro" id="IPR042172">
    <property type="entry name" value="Adenosylhomocyst_ase-like_sf"/>
</dbReference>
<dbReference type="InterPro" id="IPR000043">
    <property type="entry name" value="Adenosylhomocysteinase-like"/>
</dbReference>
<dbReference type="InterPro" id="IPR015878">
    <property type="entry name" value="Ado_hCys_hydrolase_NAD-bd"/>
</dbReference>
<dbReference type="InterPro" id="IPR036291">
    <property type="entry name" value="NAD(P)-bd_dom_sf"/>
</dbReference>
<dbReference type="InterPro" id="IPR020082">
    <property type="entry name" value="S-Ado-L-homoCys_hydrolase_CS"/>
</dbReference>
<dbReference type="NCBIfam" id="TIGR00936">
    <property type="entry name" value="ahcY"/>
    <property type="match status" value="1"/>
</dbReference>
<dbReference type="NCBIfam" id="NF004005">
    <property type="entry name" value="PRK05476.2-3"/>
    <property type="match status" value="1"/>
</dbReference>
<dbReference type="PANTHER" id="PTHR23420">
    <property type="entry name" value="ADENOSYLHOMOCYSTEINASE"/>
    <property type="match status" value="1"/>
</dbReference>
<dbReference type="PANTHER" id="PTHR23420:SF0">
    <property type="entry name" value="ADENOSYLHOMOCYSTEINASE"/>
    <property type="match status" value="1"/>
</dbReference>
<dbReference type="Pfam" id="PF05221">
    <property type="entry name" value="AdoHcyase"/>
    <property type="match status" value="1"/>
</dbReference>
<dbReference type="Pfam" id="PF00670">
    <property type="entry name" value="AdoHcyase_NAD"/>
    <property type="match status" value="1"/>
</dbReference>
<dbReference type="PIRSF" id="PIRSF001109">
    <property type="entry name" value="Ad_hcy_hydrolase"/>
    <property type="match status" value="1"/>
</dbReference>
<dbReference type="SMART" id="SM00996">
    <property type="entry name" value="AdoHcyase"/>
    <property type="match status" value="1"/>
</dbReference>
<dbReference type="SMART" id="SM00997">
    <property type="entry name" value="AdoHcyase_NAD"/>
    <property type="match status" value="1"/>
</dbReference>
<dbReference type="SUPFAM" id="SSF52283">
    <property type="entry name" value="Formate/glycerate dehydrogenase catalytic domain-like"/>
    <property type="match status" value="1"/>
</dbReference>
<dbReference type="SUPFAM" id="SSF51735">
    <property type="entry name" value="NAD(P)-binding Rossmann-fold domains"/>
    <property type="match status" value="1"/>
</dbReference>
<dbReference type="PROSITE" id="PS00738">
    <property type="entry name" value="ADOHCYASE_1"/>
    <property type="match status" value="1"/>
</dbReference>
<dbReference type="PROSITE" id="PS00739">
    <property type="entry name" value="ADOHCYASE_2"/>
    <property type="match status" value="1"/>
</dbReference>
<sequence>MAVANDYIVKDIGLADYGRKEISIAETEMPGLMSTRAEYGASQPLKGAKIAGSLHMTIQTAVLIETLKALGADIRWVSCNIYSTQDHAAAAIAAAGIPVFAVKGETLTEYWDYTSKLFDWHDGGMPNMILDDGGDATMFVHLGLRAENGDTAFLDKPESEEEEVFFALLKKKLAEKPKGWFAGLADSIKGVSEETTTGVHRLYNLAKEGKLLFPAINVNDSVTKSKFDNLYGCKESLVDGIRRGTDVMMAGKVAMVAGFGDVGKGSAASLRNAGCRVLVSEIDPICALQAAMEGYEVVTMEDAAPRADIFVTATGNKDIITIEHMRAMKDRAIVCNIGHFDNEIQVAGLKNLKWQNIKPQVDEIEFADGHRIILLSEGRLVNLGNATGHPSFVMSASFTNQTLAQIELWTNPGKYERQVYTLPKALDEKVAALHLEKIGVKLSKLRPDQAAYIGVSQTGPFKPEHYRY</sequence>
<gene>
    <name evidence="1" type="primary">ahcY</name>
    <name type="ordered locus">Mchl_4897</name>
</gene>
<evidence type="ECO:0000255" key="1">
    <source>
        <dbReference type="HAMAP-Rule" id="MF_00563"/>
    </source>
</evidence>
<feature type="chain" id="PRO_1000196670" description="Adenosylhomocysteinase">
    <location>
        <begin position="1"/>
        <end position="468"/>
    </location>
</feature>
<feature type="binding site" evidence="1">
    <location>
        <position position="57"/>
    </location>
    <ligand>
        <name>substrate</name>
    </ligand>
</feature>
<feature type="binding site" evidence="1">
    <location>
        <position position="132"/>
    </location>
    <ligand>
        <name>substrate</name>
    </ligand>
</feature>
<feature type="binding site" evidence="1">
    <location>
        <position position="194"/>
    </location>
    <ligand>
        <name>substrate</name>
    </ligand>
</feature>
<feature type="binding site" evidence="1">
    <location>
        <begin position="195"/>
        <end position="197"/>
    </location>
    <ligand>
        <name>NAD(+)</name>
        <dbReference type="ChEBI" id="CHEBI:57540"/>
    </ligand>
</feature>
<feature type="binding site" evidence="1">
    <location>
        <position position="224"/>
    </location>
    <ligand>
        <name>substrate</name>
    </ligand>
</feature>
<feature type="binding site" evidence="1">
    <location>
        <position position="228"/>
    </location>
    <ligand>
        <name>substrate</name>
    </ligand>
</feature>
<feature type="binding site" evidence="1">
    <location>
        <position position="229"/>
    </location>
    <ligand>
        <name>NAD(+)</name>
        <dbReference type="ChEBI" id="CHEBI:57540"/>
    </ligand>
</feature>
<feature type="binding site" evidence="1">
    <location>
        <begin position="258"/>
        <end position="263"/>
    </location>
    <ligand>
        <name>NAD(+)</name>
        <dbReference type="ChEBI" id="CHEBI:57540"/>
    </ligand>
</feature>
<feature type="binding site" evidence="1">
    <location>
        <position position="281"/>
    </location>
    <ligand>
        <name>NAD(+)</name>
        <dbReference type="ChEBI" id="CHEBI:57540"/>
    </ligand>
</feature>
<feature type="binding site" evidence="1">
    <location>
        <position position="316"/>
    </location>
    <ligand>
        <name>NAD(+)</name>
        <dbReference type="ChEBI" id="CHEBI:57540"/>
    </ligand>
</feature>
<feature type="binding site" evidence="1">
    <location>
        <begin position="337"/>
        <end position="339"/>
    </location>
    <ligand>
        <name>NAD(+)</name>
        <dbReference type="ChEBI" id="CHEBI:57540"/>
    </ligand>
</feature>
<feature type="binding site" evidence="1">
    <location>
        <position position="382"/>
    </location>
    <ligand>
        <name>NAD(+)</name>
        <dbReference type="ChEBI" id="CHEBI:57540"/>
    </ligand>
</feature>
<organism>
    <name type="scientific">Methylorubrum extorquens (strain CM4 / NCIMB 13688)</name>
    <name type="common">Methylobacterium extorquens</name>
    <dbReference type="NCBI Taxonomy" id="440085"/>
    <lineage>
        <taxon>Bacteria</taxon>
        <taxon>Pseudomonadati</taxon>
        <taxon>Pseudomonadota</taxon>
        <taxon>Alphaproteobacteria</taxon>
        <taxon>Hyphomicrobiales</taxon>
        <taxon>Methylobacteriaceae</taxon>
        <taxon>Methylorubrum</taxon>
    </lineage>
</organism>
<accession>B7KSJ4</accession>
<proteinExistence type="inferred from homology"/>
<protein>
    <recommendedName>
        <fullName evidence="1">Adenosylhomocysteinase</fullName>
        <ecNumber evidence="1">3.13.2.1</ecNumber>
    </recommendedName>
    <alternativeName>
        <fullName evidence="1">S-adenosyl-L-homocysteine hydrolase</fullName>
        <shortName evidence="1">AdoHcyase</shortName>
    </alternativeName>
</protein>
<keyword id="KW-0963">Cytoplasm</keyword>
<keyword id="KW-0378">Hydrolase</keyword>
<keyword id="KW-0520">NAD</keyword>
<keyword id="KW-0554">One-carbon metabolism</keyword>
<name>SAHH_METC4</name>
<comment type="function">
    <text evidence="1">May play a key role in the regulation of the intracellular concentration of adenosylhomocysteine.</text>
</comment>
<comment type="catalytic activity">
    <reaction evidence="1">
        <text>S-adenosyl-L-homocysteine + H2O = L-homocysteine + adenosine</text>
        <dbReference type="Rhea" id="RHEA:21708"/>
        <dbReference type="ChEBI" id="CHEBI:15377"/>
        <dbReference type="ChEBI" id="CHEBI:16335"/>
        <dbReference type="ChEBI" id="CHEBI:57856"/>
        <dbReference type="ChEBI" id="CHEBI:58199"/>
        <dbReference type="EC" id="3.13.2.1"/>
    </reaction>
</comment>
<comment type="cofactor">
    <cofactor evidence="1">
        <name>NAD(+)</name>
        <dbReference type="ChEBI" id="CHEBI:57540"/>
    </cofactor>
    <text evidence="1">Binds 1 NAD(+) per subunit.</text>
</comment>
<comment type="pathway">
    <text evidence="1">Amino-acid biosynthesis; L-homocysteine biosynthesis; L-homocysteine from S-adenosyl-L-homocysteine: step 1/1.</text>
</comment>
<comment type="subcellular location">
    <subcellularLocation>
        <location evidence="1">Cytoplasm</location>
    </subcellularLocation>
</comment>
<comment type="similarity">
    <text evidence="1">Belongs to the adenosylhomocysteinase family.</text>
</comment>
<reference key="1">
    <citation type="submission" date="2008-12" db="EMBL/GenBank/DDBJ databases">
        <title>Complete sequence of chromosome of Methylobacterium chloromethanicum CM4.</title>
        <authorList>
            <consortium name="US DOE Joint Genome Institute"/>
            <person name="Lucas S."/>
            <person name="Copeland A."/>
            <person name="Lapidus A."/>
            <person name="Glavina del Rio T."/>
            <person name="Dalin E."/>
            <person name="Tice H."/>
            <person name="Bruce D."/>
            <person name="Goodwin L."/>
            <person name="Pitluck S."/>
            <person name="Chertkov O."/>
            <person name="Brettin T."/>
            <person name="Detter J.C."/>
            <person name="Han C."/>
            <person name="Larimer F."/>
            <person name="Land M."/>
            <person name="Hauser L."/>
            <person name="Kyrpides N."/>
            <person name="Mikhailova N."/>
            <person name="Marx C."/>
            <person name="Richardson P."/>
        </authorList>
    </citation>
    <scope>NUCLEOTIDE SEQUENCE [LARGE SCALE GENOMIC DNA]</scope>
    <source>
        <strain>CM4 / NCIMB 13688</strain>
    </source>
</reference>